<name>NUSB_SALG2</name>
<keyword id="KW-0694">RNA-binding</keyword>
<keyword id="KW-0804">Transcription</keyword>
<keyword id="KW-0889">Transcription antitermination</keyword>
<keyword id="KW-0805">Transcription regulation</keyword>
<evidence type="ECO:0000255" key="1">
    <source>
        <dbReference type="HAMAP-Rule" id="MF_00073"/>
    </source>
</evidence>
<accession>B5R6R9</accession>
<proteinExistence type="inferred from homology"/>
<protein>
    <recommendedName>
        <fullName evidence="1">Transcription antitermination protein NusB</fullName>
    </recommendedName>
    <alternativeName>
        <fullName evidence="1">Antitermination factor NusB</fullName>
    </alternativeName>
</protein>
<organism>
    <name type="scientific">Salmonella gallinarum (strain 287/91 / NCTC 13346)</name>
    <dbReference type="NCBI Taxonomy" id="550538"/>
    <lineage>
        <taxon>Bacteria</taxon>
        <taxon>Pseudomonadati</taxon>
        <taxon>Pseudomonadota</taxon>
        <taxon>Gammaproteobacteria</taxon>
        <taxon>Enterobacterales</taxon>
        <taxon>Enterobacteriaceae</taxon>
        <taxon>Salmonella</taxon>
    </lineage>
</organism>
<reference key="1">
    <citation type="journal article" date="2008" name="Genome Res.">
        <title>Comparative genome analysis of Salmonella enteritidis PT4 and Salmonella gallinarum 287/91 provides insights into evolutionary and host adaptation pathways.</title>
        <authorList>
            <person name="Thomson N.R."/>
            <person name="Clayton D.J."/>
            <person name="Windhorst D."/>
            <person name="Vernikos G."/>
            <person name="Davidson S."/>
            <person name="Churcher C."/>
            <person name="Quail M.A."/>
            <person name="Stevens M."/>
            <person name="Jones M.A."/>
            <person name="Watson M."/>
            <person name="Barron A."/>
            <person name="Layton A."/>
            <person name="Pickard D."/>
            <person name="Kingsley R.A."/>
            <person name="Bignell A."/>
            <person name="Clark L."/>
            <person name="Harris B."/>
            <person name="Ormond D."/>
            <person name="Abdellah Z."/>
            <person name="Brooks K."/>
            <person name="Cherevach I."/>
            <person name="Chillingworth T."/>
            <person name="Woodward J."/>
            <person name="Norberczak H."/>
            <person name="Lord A."/>
            <person name="Arrowsmith C."/>
            <person name="Jagels K."/>
            <person name="Moule S."/>
            <person name="Mungall K."/>
            <person name="Saunders M."/>
            <person name="Whitehead S."/>
            <person name="Chabalgoity J.A."/>
            <person name="Maskell D."/>
            <person name="Humphreys T."/>
            <person name="Roberts M."/>
            <person name="Barrow P.A."/>
            <person name="Dougan G."/>
            <person name="Parkhill J."/>
        </authorList>
    </citation>
    <scope>NUCLEOTIDE SEQUENCE [LARGE SCALE GENOMIC DNA]</scope>
    <source>
        <strain>287/91 / NCTC 13346</strain>
    </source>
</reference>
<gene>
    <name evidence="1" type="primary">nusB</name>
    <name type="ordered locus">SG0429</name>
</gene>
<feature type="chain" id="PRO_1000092582" description="Transcription antitermination protein NusB">
    <location>
        <begin position="1"/>
        <end position="139"/>
    </location>
</feature>
<dbReference type="EMBL" id="AM933173">
    <property type="protein sequence ID" value="CAR36328.1"/>
    <property type="molecule type" value="Genomic_DNA"/>
</dbReference>
<dbReference type="RefSeq" id="WP_000801129.1">
    <property type="nucleotide sequence ID" value="NC_011274.1"/>
</dbReference>
<dbReference type="SMR" id="B5R6R9"/>
<dbReference type="GeneID" id="89550189"/>
<dbReference type="KEGG" id="seg:SG0429"/>
<dbReference type="HOGENOM" id="CLU_087843_4_1_6"/>
<dbReference type="Proteomes" id="UP000008321">
    <property type="component" value="Chromosome"/>
</dbReference>
<dbReference type="GO" id="GO:0005829">
    <property type="term" value="C:cytosol"/>
    <property type="evidence" value="ECO:0007669"/>
    <property type="project" value="TreeGrafter"/>
</dbReference>
<dbReference type="GO" id="GO:0003723">
    <property type="term" value="F:RNA binding"/>
    <property type="evidence" value="ECO:0007669"/>
    <property type="project" value="UniProtKB-UniRule"/>
</dbReference>
<dbReference type="GO" id="GO:0006353">
    <property type="term" value="P:DNA-templated transcription termination"/>
    <property type="evidence" value="ECO:0007669"/>
    <property type="project" value="UniProtKB-UniRule"/>
</dbReference>
<dbReference type="GO" id="GO:0031564">
    <property type="term" value="P:transcription antitermination"/>
    <property type="evidence" value="ECO:0007669"/>
    <property type="project" value="UniProtKB-KW"/>
</dbReference>
<dbReference type="CDD" id="cd00619">
    <property type="entry name" value="Terminator_NusB"/>
    <property type="match status" value="1"/>
</dbReference>
<dbReference type="FunFam" id="1.10.940.10:FF:000001">
    <property type="entry name" value="Transcription antitermination factor NusB"/>
    <property type="match status" value="1"/>
</dbReference>
<dbReference type="Gene3D" id="1.10.940.10">
    <property type="entry name" value="NusB-like"/>
    <property type="match status" value="1"/>
</dbReference>
<dbReference type="HAMAP" id="MF_00073">
    <property type="entry name" value="NusB"/>
    <property type="match status" value="1"/>
</dbReference>
<dbReference type="InterPro" id="IPR035926">
    <property type="entry name" value="NusB-like_sf"/>
</dbReference>
<dbReference type="InterPro" id="IPR011605">
    <property type="entry name" value="NusB_fam"/>
</dbReference>
<dbReference type="InterPro" id="IPR006027">
    <property type="entry name" value="NusB_RsmB_TIM44"/>
</dbReference>
<dbReference type="NCBIfam" id="TIGR01951">
    <property type="entry name" value="nusB"/>
    <property type="match status" value="1"/>
</dbReference>
<dbReference type="PANTHER" id="PTHR11078:SF3">
    <property type="entry name" value="ANTITERMINATION NUSB DOMAIN-CONTAINING PROTEIN"/>
    <property type="match status" value="1"/>
</dbReference>
<dbReference type="PANTHER" id="PTHR11078">
    <property type="entry name" value="N UTILIZATION SUBSTANCE PROTEIN B-RELATED"/>
    <property type="match status" value="1"/>
</dbReference>
<dbReference type="Pfam" id="PF01029">
    <property type="entry name" value="NusB"/>
    <property type="match status" value="1"/>
</dbReference>
<dbReference type="SUPFAM" id="SSF48013">
    <property type="entry name" value="NusB-like"/>
    <property type="match status" value="1"/>
</dbReference>
<comment type="function">
    <text evidence="1">Involved in transcription antitermination. Required for transcription of ribosomal RNA (rRNA) genes. Binds specifically to the boxA antiterminator sequence of the ribosomal RNA (rrn) operons.</text>
</comment>
<comment type="similarity">
    <text evidence="1">Belongs to the NusB family.</text>
</comment>
<sequence length="139" mass="15689">MKPAARRRARECAVQALYSWQLSQNDIADVEYQFLAEQDVKDVDVLYFRELLSGVATNSAYLDGLMKPYLSRLLEELGQVEKAVLRIALFELSKRSDVPYKVAINEAIELAKTFGAEDSHKFVNGVLDKAAPVIRPNKK</sequence>